<accession>Q5NVT2</accession>
<sequence length="688" mass="79863">MMAENNLKMLKIQQCVVANKLPRNRPYVCNICFKHFETPSKLARHYLIHTGQKPFECDVCHKTFRQLVHLERHQLTHSLPFKCSICQRHFKNLKTFVKHQQLHNETYQNNVKQVRRLLEAKQEKSMYGVYNTFTTEERWALHPCSKSDPMYSMKRRKNIHACTICGKMFPSQSKLDRHVLIHTGQRPFKCVLCTKSFRQSTHLKIHQLTHSEERPFQCCFCQKGFKIQSKLLKHKQIHTRNKAFRALLLKKRRTESCPMPNKLNANQGGFENGEIGESEENNPLDVHSIYIVPFQCPKCEKCFESEQILNEHSCFPARGGKIPSRFKRSYNYKTIVKKILAKLKRARTKKLDNFQSEKKVFKKSFLRNYDLISGEQSSEQTQRTFVSSLGKHGTYKTTGNRKKKTLTLPFSWQNMGKNLKGILTTENILSIDNSVNKKDLSICGSSGEEFFNNCEVLQCGFSVPRENIRTRHKICPCDKCEKVFPSISKLKRHYLIHTGQRPFGCNICGKSFRQSAHLKRHEQTHNEKSPYASLCQVEFGNFNNLSNHPDNNVNYNASQQCQAPGVQKYEVSESDQMSGVKAESQDFIPGSTGCLPNVLLESEQSNPFCSYSEHQEKNDVFLYRCSVCAKSFRSPSKLERHYLIHAGQKPFECSVCGKTFRQAPHWKRHQLTHFKERPQGKVVCLRFG</sequence>
<organism>
    <name type="scientific">Pongo abelii</name>
    <name type="common">Sumatran orangutan</name>
    <name type="synonym">Pongo pygmaeus abelii</name>
    <dbReference type="NCBI Taxonomy" id="9601"/>
    <lineage>
        <taxon>Eukaryota</taxon>
        <taxon>Metazoa</taxon>
        <taxon>Chordata</taxon>
        <taxon>Craniata</taxon>
        <taxon>Vertebrata</taxon>
        <taxon>Euteleostomi</taxon>
        <taxon>Mammalia</taxon>
        <taxon>Eutheria</taxon>
        <taxon>Euarchontoglires</taxon>
        <taxon>Primates</taxon>
        <taxon>Haplorrhini</taxon>
        <taxon>Catarrhini</taxon>
        <taxon>Hominidae</taxon>
        <taxon>Pongo</taxon>
    </lineage>
</organism>
<keyword id="KW-0238">DNA-binding</keyword>
<keyword id="KW-1017">Isopeptide bond</keyword>
<keyword id="KW-0479">Metal-binding</keyword>
<keyword id="KW-0539">Nucleus</keyword>
<keyword id="KW-1185">Reference proteome</keyword>
<keyword id="KW-0677">Repeat</keyword>
<keyword id="KW-0804">Transcription</keyword>
<keyword id="KW-0805">Transcription regulation</keyword>
<keyword id="KW-0832">Ubl conjugation</keyword>
<keyword id="KW-0862">Zinc</keyword>
<keyword id="KW-0863">Zinc-finger</keyword>
<dbReference type="EMBL" id="CR925918">
    <property type="protein sequence ID" value="CAI29581.1"/>
    <property type="molecule type" value="mRNA"/>
</dbReference>
<dbReference type="SMR" id="Q5NVT2"/>
<dbReference type="FunCoup" id="Q5NVT2">
    <property type="interactions" value="1063"/>
</dbReference>
<dbReference type="InParanoid" id="Q5NVT2"/>
<dbReference type="Proteomes" id="UP000001595">
    <property type="component" value="Unplaced"/>
</dbReference>
<dbReference type="GO" id="GO:0005634">
    <property type="term" value="C:nucleus"/>
    <property type="evidence" value="ECO:0007669"/>
    <property type="project" value="UniProtKB-SubCell"/>
</dbReference>
<dbReference type="GO" id="GO:0001228">
    <property type="term" value="F:DNA-binding transcription activator activity, RNA polymerase II-specific"/>
    <property type="evidence" value="ECO:0007669"/>
    <property type="project" value="TreeGrafter"/>
</dbReference>
<dbReference type="GO" id="GO:0000978">
    <property type="term" value="F:RNA polymerase II cis-regulatory region sequence-specific DNA binding"/>
    <property type="evidence" value="ECO:0007669"/>
    <property type="project" value="TreeGrafter"/>
</dbReference>
<dbReference type="GO" id="GO:0008270">
    <property type="term" value="F:zinc ion binding"/>
    <property type="evidence" value="ECO:0007669"/>
    <property type="project" value="UniProtKB-KW"/>
</dbReference>
<dbReference type="FunFam" id="3.30.160.60:FF:002212">
    <property type="entry name" value="Zinc finger protein 672"/>
    <property type="match status" value="1"/>
</dbReference>
<dbReference type="FunFam" id="3.30.160.60:FF:000286">
    <property type="entry name" value="Zinc finger protein 770"/>
    <property type="match status" value="1"/>
</dbReference>
<dbReference type="FunFam" id="3.30.160.60:FF:000904">
    <property type="entry name" value="Zinc finger protein 770"/>
    <property type="match status" value="1"/>
</dbReference>
<dbReference type="FunFam" id="3.30.160.60:FF:000978">
    <property type="entry name" value="Zinc finger protein 770"/>
    <property type="match status" value="1"/>
</dbReference>
<dbReference type="FunFam" id="3.30.160.60:FF:001194">
    <property type="entry name" value="Zinc finger protein 770"/>
    <property type="match status" value="1"/>
</dbReference>
<dbReference type="FunFam" id="3.30.160.60:FF:001196">
    <property type="entry name" value="Zinc finger protein 770"/>
    <property type="match status" value="1"/>
</dbReference>
<dbReference type="FunFam" id="3.30.160.60:FF:001860">
    <property type="entry name" value="Zinc finger protein 770"/>
    <property type="match status" value="1"/>
</dbReference>
<dbReference type="FunFam" id="3.30.160.60:FF:002585">
    <property type="entry name" value="Zinc finger protein 770"/>
    <property type="match status" value="1"/>
</dbReference>
<dbReference type="Gene3D" id="3.30.160.60">
    <property type="entry name" value="Classic Zinc Finger"/>
    <property type="match status" value="9"/>
</dbReference>
<dbReference type="InterPro" id="IPR036236">
    <property type="entry name" value="Znf_C2H2_sf"/>
</dbReference>
<dbReference type="InterPro" id="IPR013087">
    <property type="entry name" value="Znf_C2H2_type"/>
</dbReference>
<dbReference type="PANTHER" id="PTHR24393">
    <property type="entry name" value="ZINC FINGER PROTEIN"/>
    <property type="match status" value="1"/>
</dbReference>
<dbReference type="PANTHER" id="PTHR24393:SF100">
    <property type="entry name" value="ZINC FINGER PROTEIN-RELATED"/>
    <property type="match status" value="1"/>
</dbReference>
<dbReference type="Pfam" id="PF00096">
    <property type="entry name" value="zf-C2H2"/>
    <property type="match status" value="8"/>
</dbReference>
<dbReference type="SMART" id="SM00355">
    <property type="entry name" value="ZnF_C2H2"/>
    <property type="match status" value="11"/>
</dbReference>
<dbReference type="SUPFAM" id="SSF57667">
    <property type="entry name" value="beta-beta-alpha zinc fingers"/>
    <property type="match status" value="6"/>
</dbReference>
<dbReference type="PROSITE" id="PS00028">
    <property type="entry name" value="ZINC_FINGER_C2H2_1"/>
    <property type="match status" value="10"/>
</dbReference>
<dbReference type="PROSITE" id="PS50157">
    <property type="entry name" value="ZINC_FINGER_C2H2_2"/>
    <property type="match status" value="11"/>
</dbReference>
<comment type="function">
    <text>May be involved in transcriptional regulation.</text>
</comment>
<comment type="subcellular location">
    <subcellularLocation>
        <location evidence="3">Nucleus</location>
    </subcellularLocation>
</comment>
<comment type="similarity">
    <text evidence="3">Belongs to the krueppel C2H2-type zinc-finger protein family.</text>
</comment>
<protein>
    <recommendedName>
        <fullName>Zinc finger protein 770</fullName>
    </recommendedName>
</protein>
<name>ZN770_PONAB</name>
<evidence type="ECO:0000250" key="1">
    <source>
        <dbReference type="UniProtKB" id="Q6IQ21"/>
    </source>
</evidence>
<evidence type="ECO:0000255" key="2">
    <source>
        <dbReference type="PROSITE-ProRule" id="PRU00042"/>
    </source>
</evidence>
<evidence type="ECO:0000305" key="3"/>
<feature type="chain" id="PRO_0000280438" description="Zinc finger protein 770">
    <location>
        <begin position="1"/>
        <end position="688" status="greater than"/>
    </location>
</feature>
<feature type="zinc finger region" description="C2H2-type 1" evidence="2">
    <location>
        <begin position="27"/>
        <end position="49"/>
    </location>
</feature>
<feature type="zinc finger region" description="C2H2-type 2" evidence="2">
    <location>
        <begin position="55"/>
        <end position="77"/>
    </location>
</feature>
<feature type="zinc finger region" description="C2H2-type 3" evidence="2">
    <location>
        <begin position="81"/>
        <end position="103"/>
    </location>
</feature>
<feature type="zinc finger region" description="C2H2-type 4" evidence="2">
    <location>
        <begin position="160"/>
        <end position="182"/>
    </location>
</feature>
<feature type="zinc finger region" description="C2H2-type 5" evidence="2">
    <location>
        <begin position="188"/>
        <end position="210"/>
    </location>
</feature>
<feature type="zinc finger region" description="C2H2-type 6" evidence="2">
    <location>
        <begin position="216"/>
        <end position="238"/>
    </location>
</feature>
<feature type="zinc finger region" description="C2H2-type 7; degenerate" evidence="2">
    <location>
        <begin position="294"/>
        <end position="318"/>
    </location>
</feature>
<feature type="zinc finger region" description="C2H2-type 8" evidence="2">
    <location>
        <begin position="475"/>
        <end position="497"/>
    </location>
</feature>
<feature type="zinc finger region" description="C2H2-type 9" evidence="2">
    <location>
        <begin position="503"/>
        <end position="525"/>
    </location>
</feature>
<feature type="zinc finger region" description="C2H2-type 10" evidence="2">
    <location>
        <begin position="623"/>
        <end position="645"/>
    </location>
</feature>
<feature type="zinc finger region" description="C2H2-type 11" evidence="2">
    <location>
        <begin position="651"/>
        <end position="673"/>
    </location>
</feature>
<feature type="cross-link" description="Glycyl lysine isopeptide (Lys-Gly) (interchain with G-Cter in SUMO2)" evidence="1">
    <location>
        <position position="11"/>
    </location>
</feature>
<feature type="cross-link" description="Glycyl lysine isopeptide (Lys-Gly) (interchain with G-Cter in SUMO2)" evidence="1">
    <location>
        <position position="112"/>
    </location>
</feature>
<feature type="cross-link" description="Glycyl lysine isopeptide (Lys-Gly) (interchain with G-Cter in SUMO2)" evidence="1">
    <location>
        <position position="121"/>
    </location>
</feature>
<feature type="cross-link" description="Glycyl lysine isopeptide (Lys-Gly) (interchain with G-Cter in SUMO2)" evidence="1">
    <location>
        <position position="146"/>
    </location>
</feature>
<feature type="cross-link" description="Glycyl lysine isopeptide (Lys-Gly) (interchain with G-Cter in SUMO2)" evidence="1">
    <location>
        <position position="262"/>
    </location>
</feature>
<feature type="cross-link" description="Glycyl lysine isopeptide (Lys-Gly) (interchain with G-Cter in SUMO2)" evidence="1">
    <location>
        <position position="420"/>
    </location>
</feature>
<feature type="cross-link" description="Glycyl lysine isopeptide (Lys-Gly) (interchain with G-Cter in SUMO2)" evidence="1">
    <location>
        <position position="437"/>
    </location>
</feature>
<feature type="cross-link" description="Glycyl lysine isopeptide (Lys-Gly) (interchain with G-Cter in SUMO2)" evidence="1">
    <location>
        <position position="681"/>
    </location>
</feature>
<feature type="non-terminal residue">
    <location>
        <position position="688"/>
    </location>
</feature>
<reference key="1">
    <citation type="submission" date="2004-11" db="EMBL/GenBank/DDBJ databases">
        <authorList>
            <consortium name="The German cDNA consortium"/>
        </authorList>
    </citation>
    <scope>NUCLEOTIDE SEQUENCE [LARGE SCALE MRNA]</scope>
    <source>
        <tissue>Kidney</tissue>
    </source>
</reference>
<proteinExistence type="evidence at transcript level"/>
<gene>
    <name type="primary">ZNF770</name>
</gene>